<organism>
    <name type="scientific">Oryza sativa subsp. japonica</name>
    <name type="common">Rice</name>
    <dbReference type="NCBI Taxonomy" id="39947"/>
    <lineage>
        <taxon>Eukaryota</taxon>
        <taxon>Viridiplantae</taxon>
        <taxon>Streptophyta</taxon>
        <taxon>Embryophyta</taxon>
        <taxon>Tracheophyta</taxon>
        <taxon>Spermatophyta</taxon>
        <taxon>Magnoliopsida</taxon>
        <taxon>Liliopsida</taxon>
        <taxon>Poales</taxon>
        <taxon>Poaceae</taxon>
        <taxon>BOP clade</taxon>
        <taxon>Oryzoideae</taxon>
        <taxon>Oryzeae</taxon>
        <taxon>Oryzinae</taxon>
        <taxon>Oryza</taxon>
        <taxon>Oryza sativa</taxon>
    </lineage>
</organism>
<name>GLGL4_ORYSJ</name>
<evidence type="ECO:0000255" key="1"/>
<evidence type="ECO:0000269" key="2">
    <source>
    </source>
</evidence>
<evidence type="ECO:0000269" key="3">
    <source>
    </source>
</evidence>
<evidence type="ECO:0000303" key="4">
    <source>
    </source>
</evidence>
<evidence type="ECO:0000303" key="5">
    <source>
    </source>
</evidence>
<evidence type="ECO:0000305" key="6"/>
<evidence type="ECO:0000305" key="7">
    <source>
    </source>
</evidence>
<evidence type="ECO:0000312" key="8">
    <source>
        <dbReference type="EMBL" id="BAC16096.1"/>
    </source>
</evidence>
<evidence type="ECO:0000312" key="9">
    <source>
        <dbReference type="EMBL" id="BAD30207.1"/>
    </source>
</evidence>
<evidence type="ECO:0000312" key="10">
    <source>
        <dbReference type="EMBL" id="BAF21190.1"/>
    </source>
</evidence>
<keyword id="KW-0021">Allosteric enzyme</keyword>
<keyword id="KW-0067">ATP-binding</keyword>
<keyword id="KW-0150">Chloroplast</keyword>
<keyword id="KW-0547">Nucleotide-binding</keyword>
<keyword id="KW-0548">Nucleotidyltransferase</keyword>
<keyword id="KW-0934">Plastid</keyword>
<keyword id="KW-1185">Reference proteome</keyword>
<keyword id="KW-0750">Starch biosynthesis</keyword>
<keyword id="KW-0808">Transferase</keyword>
<keyword id="KW-0809">Transit peptide</keyword>
<comment type="function">
    <text evidence="7">Involved in synthesis of starch. Catalyzes the synthesis of ADP-glucose, a molecule that serves as an activated glycosyl donor for alpha-1,4-glucan synthesis. Essential for starch synthesis in leaf chloroplasts.</text>
</comment>
<comment type="catalytic activity">
    <reaction evidence="7">
        <text>alpha-D-glucose 1-phosphate + ATP + H(+) = ADP-alpha-D-glucose + diphosphate</text>
        <dbReference type="Rhea" id="RHEA:12120"/>
        <dbReference type="ChEBI" id="CHEBI:15378"/>
        <dbReference type="ChEBI" id="CHEBI:30616"/>
        <dbReference type="ChEBI" id="CHEBI:33019"/>
        <dbReference type="ChEBI" id="CHEBI:57498"/>
        <dbReference type="ChEBI" id="CHEBI:58601"/>
        <dbReference type="EC" id="2.7.7.27"/>
    </reaction>
</comment>
<comment type="activity regulation">
    <text evidence="7">Activated by 3'phosphoglycerate, inhibited by orthophosphate. Allosteric regulation.</text>
</comment>
<comment type="pathway">
    <text evidence="6">Glycan biosynthesis; starch biosynthesis.</text>
</comment>
<comment type="subunit">
    <text evidence="7">Heterotetramer composed of two small and two large subunits.</text>
</comment>
<comment type="subcellular location">
    <subcellularLocation>
        <location evidence="3">Plastid</location>
        <location evidence="3">Chloroplast</location>
    </subcellularLocation>
</comment>
<comment type="tissue specificity">
    <text evidence="2">Expressed in leaves and stems.</text>
</comment>
<comment type="developmental stage">
    <text evidence="2">Expressed in developing seeds from 1 to 20 days after flowering (DAF).</text>
</comment>
<comment type="induction">
    <text evidence="2">Induced by sucrose and glucose.</text>
</comment>
<comment type="similarity">
    <text evidence="6">Belongs to the bacterial/plant glucose-1-phosphate adenylyltransferase family.</text>
</comment>
<comment type="sequence caution" evidence="6">
    <conflict type="erroneous gene model prediction">
        <sequence resource="EMBL-CDS" id="BAC16096"/>
    </conflict>
</comment>
<comment type="sequence caution" evidence="6">
    <conflict type="erroneous gene model prediction">
        <sequence resource="EMBL-CDS" id="BAD30207"/>
    </conflict>
</comment>
<gene>
    <name evidence="5" type="primary">AGPL4</name>
    <name evidence="4" type="synonym">APL4</name>
    <name evidence="10" type="ordered locus">Os07g0243200</name>
    <name evidence="6" type="ordered locus">LOC_Os07g13980</name>
    <name evidence="9" type="ORF">OJ1341_A08.119</name>
    <name evidence="8" type="ORF">P0418E08.141</name>
</gene>
<proteinExistence type="evidence at protein level"/>
<reference key="1">
    <citation type="journal article" date="2005" name="Nature">
        <title>The map-based sequence of the rice genome.</title>
        <authorList>
            <consortium name="International rice genome sequencing project (IRGSP)"/>
        </authorList>
    </citation>
    <scope>NUCLEOTIDE SEQUENCE [LARGE SCALE GENOMIC DNA]</scope>
    <source>
        <strain>cv. Nipponbare</strain>
    </source>
</reference>
<reference key="2">
    <citation type="journal article" date="2008" name="Nucleic Acids Res.">
        <title>The rice annotation project database (RAP-DB): 2008 update.</title>
        <authorList>
            <consortium name="The rice annotation project (RAP)"/>
        </authorList>
    </citation>
    <scope>GENOME REANNOTATION</scope>
    <source>
        <strain>cv. Nipponbare</strain>
    </source>
</reference>
<reference key="3">
    <citation type="journal article" date="2013" name="Rice">
        <title>Improvement of the Oryza sativa Nipponbare reference genome using next generation sequence and optical map data.</title>
        <authorList>
            <person name="Kawahara Y."/>
            <person name="de la Bastide M."/>
            <person name="Hamilton J.P."/>
            <person name="Kanamori H."/>
            <person name="McCombie W.R."/>
            <person name="Ouyang S."/>
            <person name="Schwartz D.C."/>
            <person name="Tanaka T."/>
            <person name="Wu J."/>
            <person name="Zhou S."/>
            <person name="Childs K.L."/>
            <person name="Davidson R.M."/>
            <person name="Lin H."/>
            <person name="Quesada-Ocampo L."/>
            <person name="Vaillancourt B."/>
            <person name="Sakai H."/>
            <person name="Lee S.S."/>
            <person name="Kim J."/>
            <person name="Numa H."/>
            <person name="Itoh T."/>
            <person name="Buell C.R."/>
            <person name="Matsumoto T."/>
        </authorList>
    </citation>
    <scope>GENOME REANNOTATION</scope>
    <source>
        <strain>cv. Nipponbare</strain>
    </source>
</reference>
<reference key="4">
    <citation type="journal article" date="2003" name="Science">
        <title>Collection, mapping, and annotation of over 28,000 cDNA clones from japonica rice.</title>
        <authorList>
            <consortium name="The rice full-length cDNA consortium"/>
        </authorList>
    </citation>
    <scope>NUCLEOTIDE SEQUENCE [LARGE SCALE MRNA]</scope>
    <source>
        <strain>cv. Nipponbare</strain>
    </source>
</reference>
<reference key="5">
    <citation type="journal article" date="2005" name="Plant Cell Physiol.">
        <title>Gene expression of ADP-glucose pyrophosphorylase and starch contents in rice cultured cells are cooperatively regulated by sucrose and ABA.</title>
        <authorList>
            <person name="Akihiro T."/>
            <person name="Mizuno K."/>
            <person name="Fujimura T."/>
        </authorList>
    </citation>
    <scope>TISSUE SPECIFICITY</scope>
    <scope>DEVELOPMENTAL STAGE</scope>
    <scope>INDUCTION</scope>
</reference>
<reference key="6">
    <citation type="journal article" date="2007" name="Plant Mol. Biol.">
        <title>Identification of the ADP-glucose pyrophosphorylase isoforms essential for starch synthesis in the leaf and seed endosperm of rice (Oryza sativa L.).</title>
        <authorList>
            <person name="Lee S.K."/>
            <person name="Hwang S.K."/>
            <person name="Han M."/>
            <person name="Eom J.S."/>
            <person name="Kang H.G."/>
            <person name="Han Y."/>
            <person name="Choi S.B."/>
            <person name="Cho M.H."/>
            <person name="Bhoo S.H."/>
            <person name="An G."/>
            <person name="Hahn T.R."/>
            <person name="Okita T.W."/>
            <person name="Jeon J.S."/>
        </authorList>
    </citation>
    <scope>FUNCTION</scope>
    <scope>CATALYTIC ACTIVITY</scope>
    <scope>ACTIVITY REGULATION</scope>
    <scope>SUBUNIT</scope>
    <scope>SUBCELLULAR LOCATION</scope>
</reference>
<dbReference type="EC" id="2.7.7.27" evidence="7"/>
<dbReference type="EMBL" id="AP004382">
    <property type="protein sequence ID" value="BAC16096.1"/>
    <property type="status" value="ALT_SEQ"/>
    <property type="molecule type" value="Genomic_DNA"/>
</dbReference>
<dbReference type="EMBL" id="AP003754">
    <property type="protein sequence ID" value="BAD30207.1"/>
    <property type="status" value="ALT_SEQ"/>
    <property type="molecule type" value="Genomic_DNA"/>
</dbReference>
<dbReference type="EMBL" id="AP008213">
    <property type="protein sequence ID" value="BAF21190.1"/>
    <property type="molecule type" value="Genomic_DNA"/>
</dbReference>
<dbReference type="EMBL" id="AP014963">
    <property type="protein sequence ID" value="BAT00789.1"/>
    <property type="molecule type" value="Genomic_DNA"/>
</dbReference>
<dbReference type="EMBL" id="AK121036">
    <property type="status" value="NOT_ANNOTATED_CDS"/>
    <property type="molecule type" value="mRNA"/>
</dbReference>
<dbReference type="SMR" id="Q0D7I3"/>
<dbReference type="FunCoup" id="Q0D7I3">
    <property type="interactions" value="246"/>
</dbReference>
<dbReference type="STRING" id="39947.Q0D7I3"/>
<dbReference type="PaxDb" id="39947-Q0D7I3"/>
<dbReference type="EnsemblPlants" id="Os07t0243200-01">
    <property type="protein sequence ID" value="Os07t0243200-01"/>
    <property type="gene ID" value="Os07g0243200"/>
</dbReference>
<dbReference type="GeneID" id="4342819"/>
<dbReference type="Gramene" id="Os07t0243200-01">
    <property type="protein sequence ID" value="Os07t0243200-01"/>
    <property type="gene ID" value="Os07g0243200"/>
</dbReference>
<dbReference type="KEGG" id="dosa:Os07g0243200"/>
<dbReference type="KEGG" id="osa:4342819"/>
<dbReference type="eggNOG" id="KOG1322">
    <property type="taxonomic scope" value="Eukaryota"/>
</dbReference>
<dbReference type="HOGENOM" id="CLU_029499_14_4_1"/>
<dbReference type="InParanoid" id="Q0D7I3"/>
<dbReference type="OMA" id="CKYMASM"/>
<dbReference type="OrthoDB" id="1733332at2759"/>
<dbReference type="PlantReactome" id="R-OSA-1119477">
    <property type="pathway name" value="Starch biosynthesis"/>
</dbReference>
<dbReference type="UniPathway" id="UPA00152"/>
<dbReference type="Proteomes" id="UP000000763">
    <property type="component" value="Chromosome 7"/>
</dbReference>
<dbReference type="Proteomes" id="UP000059680">
    <property type="component" value="Chromosome 7"/>
</dbReference>
<dbReference type="GO" id="GO:0009507">
    <property type="term" value="C:chloroplast"/>
    <property type="evidence" value="ECO:0007669"/>
    <property type="project" value="UniProtKB-SubCell"/>
</dbReference>
<dbReference type="GO" id="GO:0005524">
    <property type="term" value="F:ATP binding"/>
    <property type="evidence" value="ECO:0007669"/>
    <property type="project" value="UniProtKB-KW"/>
</dbReference>
<dbReference type="GO" id="GO:0008878">
    <property type="term" value="F:glucose-1-phosphate adenylyltransferase activity"/>
    <property type="evidence" value="ECO:0007669"/>
    <property type="project" value="UniProtKB-EC"/>
</dbReference>
<dbReference type="GO" id="GO:0005978">
    <property type="term" value="P:glycogen biosynthetic process"/>
    <property type="evidence" value="ECO:0007669"/>
    <property type="project" value="InterPro"/>
</dbReference>
<dbReference type="GO" id="GO:0019252">
    <property type="term" value="P:starch biosynthetic process"/>
    <property type="evidence" value="ECO:0007669"/>
    <property type="project" value="UniProtKB-UniPathway"/>
</dbReference>
<dbReference type="CDD" id="cd02508">
    <property type="entry name" value="ADP_Glucose_PP"/>
    <property type="match status" value="1"/>
</dbReference>
<dbReference type="CDD" id="cd04651">
    <property type="entry name" value="LbH_G1P_AT_C"/>
    <property type="match status" value="1"/>
</dbReference>
<dbReference type="FunFam" id="2.160.10.10:FF:000010">
    <property type="entry name" value="Glucose-1-phosphate adenylyltransferase"/>
    <property type="match status" value="1"/>
</dbReference>
<dbReference type="Gene3D" id="2.160.10.10">
    <property type="entry name" value="Hexapeptide repeat proteins"/>
    <property type="match status" value="1"/>
</dbReference>
<dbReference type="Gene3D" id="3.90.550.10">
    <property type="entry name" value="Spore Coat Polysaccharide Biosynthesis Protein SpsA, Chain A"/>
    <property type="match status" value="1"/>
</dbReference>
<dbReference type="InterPro" id="IPR011831">
    <property type="entry name" value="ADP-Glc_PPase"/>
</dbReference>
<dbReference type="InterPro" id="IPR005836">
    <property type="entry name" value="ADP_Glu_pyroP_CS"/>
</dbReference>
<dbReference type="InterPro" id="IPR005835">
    <property type="entry name" value="NTP_transferase_dom"/>
</dbReference>
<dbReference type="InterPro" id="IPR029044">
    <property type="entry name" value="Nucleotide-diphossugar_trans"/>
</dbReference>
<dbReference type="InterPro" id="IPR011004">
    <property type="entry name" value="Trimer_LpxA-like_sf"/>
</dbReference>
<dbReference type="NCBIfam" id="TIGR02091">
    <property type="entry name" value="glgC"/>
    <property type="match status" value="1"/>
</dbReference>
<dbReference type="NCBIfam" id="NF002772">
    <property type="entry name" value="PRK02862.1"/>
    <property type="match status" value="1"/>
</dbReference>
<dbReference type="PANTHER" id="PTHR43523:SF15">
    <property type="entry name" value="GLUCOSE-1-PHOSPHATE ADENYLYLTRANSFERASE LARGE SUBUNIT 4, CHLOROPLASTIC_AMYLOPLASTIC"/>
    <property type="match status" value="1"/>
</dbReference>
<dbReference type="PANTHER" id="PTHR43523">
    <property type="entry name" value="GLUCOSE-1-PHOSPHATE ADENYLYLTRANSFERASE-RELATED"/>
    <property type="match status" value="1"/>
</dbReference>
<dbReference type="Pfam" id="PF25247">
    <property type="entry name" value="LbH_GLGC"/>
    <property type="match status" value="1"/>
</dbReference>
<dbReference type="Pfam" id="PF00483">
    <property type="entry name" value="NTP_transferase"/>
    <property type="match status" value="1"/>
</dbReference>
<dbReference type="SUPFAM" id="SSF53448">
    <property type="entry name" value="Nucleotide-diphospho-sugar transferases"/>
    <property type="match status" value="1"/>
</dbReference>
<dbReference type="SUPFAM" id="SSF51161">
    <property type="entry name" value="Trimeric LpxA-like enzymes"/>
    <property type="match status" value="1"/>
</dbReference>
<dbReference type="PROSITE" id="PS00808">
    <property type="entry name" value="ADP_GLC_PYROPHOSPH_1"/>
    <property type="match status" value="1"/>
</dbReference>
<dbReference type="PROSITE" id="PS00809">
    <property type="entry name" value="ADP_GLC_PYROPHOSPH_2"/>
    <property type="match status" value="1"/>
</dbReference>
<dbReference type="PROSITE" id="PS00810">
    <property type="entry name" value="ADP_GLC_PYROPHOSPH_3"/>
    <property type="match status" value="1"/>
</dbReference>
<sequence>MATCSWAATTAAAAPPRPPARCRSRVAALRRTAAASAAAASCVLAEAPKGLKVEQADAVEPAAAAAARRDVGPDTVASIILGGGAGTRLFPLTRTRAKPAVPVGGCYRLIDIPMSNCINSKINKIYVLTQFNSQSLNRHIARTYNIGEGVGFGDGFVEVLAATQTTGESGKRWFQGTADAVRQFLWLFEDARLKRIENILILSGDHLYRMDYMDFVQKHVDKGADISVACVPVDESRASDFGLMKTDKNGRITDFLEKPKDESLKSMQLDMGTFGLRPEVADTCKYMASMGIYVFRTDILLRLLRGHYPTANDFGSEVIPMAAKDYNVQAYLFDGYWEDIGTIKSFFEANLALTDQSPNFYFYDPVKPIFTSPRFLPPTKVENCKVLNSIVSHGCFLTECSVDRSVIGVRSRLEPGVQLKDTMMMGADYYQTEAERFSELSDGKVPVGVGENTIIRNCIIDKNARIGKNVMIMNSQNVQEAERPLEGFYIRSGITVVLKNAVIPDGTVI</sequence>
<feature type="transit peptide" description="Chloroplast" evidence="1">
    <location>
        <begin position="1"/>
        <end position="36"/>
    </location>
</feature>
<feature type="chain" id="PRO_0000441127" description="Glucose-1-phosphate adenylyltransferase large subunit 4, chloroplastic/amyloplastic" evidence="1">
    <location>
        <begin position="37"/>
        <end position="509"/>
    </location>
</feature>
<accession>Q0D7I3</accession>
<accession>Q8GRM4</accession>
<protein>
    <recommendedName>
        <fullName evidence="6">Glucose-1-phosphate adenylyltransferase large subunit 4, chloroplastic/amyloplastic</fullName>
        <shortName evidence="5">OsAGPL4</shortName>
        <shortName evidence="4">OsAPL4</shortName>
        <ecNumber evidence="7">2.7.7.27</ecNumber>
    </recommendedName>
    <alternativeName>
        <fullName evidence="6">ADP-glucose pyrophosphorylase AGPL4</fullName>
    </alternativeName>
    <alternativeName>
        <fullName evidence="6">ADP-glucose synthase AGPL4</fullName>
    </alternativeName>
</protein>